<feature type="chain" id="PRO_0000211116" description="Segregation and condensation protein A">
    <location>
        <begin position="1"/>
        <end position="233"/>
    </location>
</feature>
<proteinExistence type="inferred from homology"/>
<dbReference type="EMBL" id="AE004092">
    <property type="protein sequence ID" value="AAK33411.1"/>
    <property type="molecule type" value="Genomic_DNA"/>
</dbReference>
<dbReference type="EMBL" id="CP000017">
    <property type="protein sequence ID" value="AAZ50927.1"/>
    <property type="molecule type" value="Genomic_DNA"/>
</dbReference>
<dbReference type="RefSeq" id="NP_268690.1">
    <property type="nucleotide sequence ID" value="NC_002737.2"/>
</dbReference>
<dbReference type="SMR" id="Q9A1B2"/>
<dbReference type="PaxDb" id="1314-HKU360_00344"/>
<dbReference type="KEGG" id="spy:SPy_0366"/>
<dbReference type="KEGG" id="spz:M5005_Spy0308"/>
<dbReference type="PATRIC" id="fig|160490.10.peg.317"/>
<dbReference type="HOGENOM" id="CLU_038686_3_3_9"/>
<dbReference type="OMA" id="TRQYMGY"/>
<dbReference type="Proteomes" id="UP000000750">
    <property type="component" value="Chromosome"/>
</dbReference>
<dbReference type="GO" id="GO:0005737">
    <property type="term" value="C:cytoplasm"/>
    <property type="evidence" value="ECO:0007669"/>
    <property type="project" value="UniProtKB-SubCell"/>
</dbReference>
<dbReference type="GO" id="GO:0051301">
    <property type="term" value="P:cell division"/>
    <property type="evidence" value="ECO:0007669"/>
    <property type="project" value="UniProtKB-KW"/>
</dbReference>
<dbReference type="GO" id="GO:0007059">
    <property type="term" value="P:chromosome segregation"/>
    <property type="evidence" value="ECO:0007669"/>
    <property type="project" value="UniProtKB-UniRule"/>
</dbReference>
<dbReference type="GO" id="GO:0006260">
    <property type="term" value="P:DNA replication"/>
    <property type="evidence" value="ECO:0007669"/>
    <property type="project" value="UniProtKB-UniRule"/>
</dbReference>
<dbReference type="Gene3D" id="6.10.250.2410">
    <property type="match status" value="1"/>
</dbReference>
<dbReference type="HAMAP" id="MF_01805">
    <property type="entry name" value="ScpA"/>
    <property type="match status" value="1"/>
</dbReference>
<dbReference type="InterPro" id="IPR003768">
    <property type="entry name" value="ScpA"/>
</dbReference>
<dbReference type="NCBIfam" id="NF000993">
    <property type="entry name" value="PRK00104.1-2"/>
    <property type="match status" value="1"/>
</dbReference>
<dbReference type="PANTHER" id="PTHR33969">
    <property type="entry name" value="SEGREGATION AND CONDENSATION PROTEIN A"/>
    <property type="match status" value="1"/>
</dbReference>
<dbReference type="PANTHER" id="PTHR33969:SF2">
    <property type="entry name" value="SEGREGATION AND CONDENSATION PROTEIN A"/>
    <property type="match status" value="1"/>
</dbReference>
<dbReference type="Pfam" id="PF02616">
    <property type="entry name" value="SMC_ScpA"/>
    <property type="match status" value="1"/>
</dbReference>
<reference key="1">
    <citation type="journal article" date="2001" name="Proc. Natl. Acad. Sci. U.S.A.">
        <title>Complete genome sequence of an M1 strain of Streptococcus pyogenes.</title>
        <authorList>
            <person name="Ferretti J.J."/>
            <person name="McShan W.M."/>
            <person name="Ajdic D.J."/>
            <person name="Savic D.J."/>
            <person name="Savic G."/>
            <person name="Lyon K."/>
            <person name="Primeaux C."/>
            <person name="Sezate S."/>
            <person name="Suvorov A.N."/>
            <person name="Kenton S."/>
            <person name="Lai H.S."/>
            <person name="Lin S.P."/>
            <person name="Qian Y."/>
            <person name="Jia H.G."/>
            <person name="Najar F.Z."/>
            <person name="Ren Q."/>
            <person name="Zhu H."/>
            <person name="Song L."/>
            <person name="White J."/>
            <person name="Yuan X."/>
            <person name="Clifton S.W."/>
            <person name="Roe B.A."/>
            <person name="McLaughlin R.E."/>
        </authorList>
    </citation>
    <scope>NUCLEOTIDE SEQUENCE [LARGE SCALE GENOMIC DNA]</scope>
    <source>
        <strain>ATCC 700294 / SF370 / Serotype M1</strain>
    </source>
</reference>
<reference key="2">
    <citation type="journal article" date="2005" name="J. Infect. Dis.">
        <title>Evolutionary origin and emergence of a highly successful clone of serotype M1 group A Streptococcus involved multiple horizontal gene transfer events.</title>
        <authorList>
            <person name="Sumby P."/>
            <person name="Porcella S.F."/>
            <person name="Madrigal A.G."/>
            <person name="Barbian K.D."/>
            <person name="Virtaneva K."/>
            <person name="Ricklefs S.M."/>
            <person name="Sturdevant D.E."/>
            <person name="Graham M.R."/>
            <person name="Vuopio-Varkila J."/>
            <person name="Hoe N.P."/>
            <person name="Musser J.M."/>
        </authorList>
    </citation>
    <scope>NUCLEOTIDE SEQUENCE [LARGE SCALE GENOMIC DNA]</scope>
    <source>
        <strain>ATCC BAA-947 / MGAS5005 / Serotype M1</strain>
    </source>
</reference>
<comment type="function">
    <text evidence="1">Participates in chromosomal partition during cell division. May act via the formation of a condensin-like complex containing Smc and ScpB that pull DNA away from mid-cell into both cell halves.</text>
</comment>
<comment type="subunit">
    <text evidence="1">Component of a cohesin-like complex composed of ScpA, ScpB and the Smc homodimer, in which ScpA and ScpB bind to the head domain of Smc. The presence of the three proteins is required for the association of the complex with DNA.</text>
</comment>
<comment type="subcellular location">
    <subcellularLocation>
        <location evidence="1">Cytoplasm</location>
    </subcellularLocation>
    <text evidence="1">Associated with two foci at the outer edges of the nucleoid region in young cells, and at four foci within both cell halves in older cells.</text>
</comment>
<comment type="similarity">
    <text evidence="1">Belongs to the ScpA family.</text>
</comment>
<protein>
    <recommendedName>
        <fullName evidence="1">Segregation and condensation protein A</fullName>
    </recommendedName>
</protein>
<keyword id="KW-0131">Cell cycle</keyword>
<keyword id="KW-0132">Cell division</keyword>
<keyword id="KW-0159">Chromosome partition</keyword>
<keyword id="KW-0963">Cytoplasm</keyword>
<keyword id="KW-1185">Reference proteome</keyword>
<gene>
    <name evidence="1" type="primary">scpA</name>
    <name type="ordered locus">SPy_0366</name>
    <name type="ordered locus">M5005_Spy0308</name>
</gene>
<name>SCPA_STRP1</name>
<accession>Q9A1B2</accession>
<accession>Q490P1</accession>
<evidence type="ECO:0000255" key="1">
    <source>
        <dbReference type="HAMAP-Rule" id="MF_01805"/>
    </source>
</evidence>
<sequence length="233" mass="27319">MDIKLKDFEGPLDLLLHLVSQYKVDIYEVPIVEVIEQYLNYIETLQVMKLEVAGDYMLMASQLMLIKSRRLLPKVVEHIEEDLEQDLLEKIEEYSRFKAVSQALAKQHDQRAKWYSKPKQELIFEDAILQEDKTVMDLFLAFSNIMAAKRAVLKNNHTVIERDDYKIEDMMASIKQRLEKENVIRLSAIFEECQTLNEVISIFLASLELIKLHVVFVEQLSNFGAIILRKEKK</sequence>
<organism>
    <name type="scientific">Streptococcus pyogenes serotype M1</name>
    <dbReference type="NCBI Taxonomy" id="301447"/>
    <lineage>
        <taxon>Bacteria</taxon>
        <taxon>Bacillati</taxon>
        <taxon>Bacillota</taxon>
        <taxon>Bacilli</taxon>
        <taxon>Lactobacillales</taxon>
        <taxon>Streptococcaceae</taxon>
        <taxon>Streptococcus</taxon>
    </lineage>
</organism>